<proteinExistence type="evidence at protein level"/>
<organism>
    <name type="scientific">Homo sapiens</name>
    <name type="common">Human</name>
    <dbReference type="NCBI Taxonomy" id="9606"/>
    <lineage>
        <taxon>Eukaryota</taxon>
        <taxon>Metazoa</taxon>
        <taxon>Chordata</taxon>
        <taxon>Craniata</taxon>
        <taxon>Vertebrata</taxon>
        <taxon>Euteleostomi</taxon>
        <taxon>Mammalia</taxon>
        <taxon>Eutheria</taxon>
        <taxon>Euarchontoglires</taxon>
        <taxon>Primates</taxon>
        <taxon>Haplorrhini</taxon>
        <taxon>Catarrhini</taxon>
        <taxon>Hominidae</taxon>
        <taxon>Homo</taxon>
    </lineage>
</organism>
<protein>
    <recommendedName>
        <fullName>Probable ATP-dependent RNA helicase DDX47</fullName>
        <ecNumber>3.6.4.13</ecNumber>
    </recommendedName>
    <alternativeName>
        <fullName>DEAD box protein 47</fullName>
    </alternativeName>
</protein>
<sequence>MAAPEEHDSPTEASQPIVEEEETKTFKDLGVTDVLCEACDQLGWTKPTKIQIEAIPLALQGRDIIGLAETGSGKTGAFALPILNALLETPQRLFALVLTPTRELAFQISEQFEALGSSIGVQSAVIVGGIDSMSQSLALAKKPHIIIATPGRLIDHLENTKGFNLRALKYLVMDEADRILNMDFETEVDKILKVIPRDRKTFLFSATMTKKVQKLQRAALKNPVKCAVSSKYQTVEKLQQYYIFIPSKFKDTYLVYILNELAGNSFMIFCSTCNNTQRTALLLRNLGFTAIPLHGQMSQSKRLGSLNKFKAKARSILLATDVASRGLDIPHVDVVVNFDIPTHSKDYIHRVGRTARAGRSGKAITFVTQYDVELFQRIEHLIGKKLPGFPTQDDEVMMLTERVAEAQRFARMELREHGEKKKRSREDAGDNDDTEGAIGVRNKVAGGKMKKRKGR</sequence>
<keyword id="KW-0002">3D-structure</keyword>
<keyword id="KW-0007">Acetylation</keyword>
<keyword id="KW-0025">Alternative splicing</keyword>
<keyword id="KW-0053">Apoptosis</keyword>
<keyword id="KW-0067">ATP-binding</keyword>
<keyword id="KW-0903">Direct protein sequencing</keyword>
<keyword id="KW-0347">Helicase</keyword>
<keyword id="KW-0378">Hydrolase</keyword>
<keyword id="KW-0507">mRNA processing</keyword>
<keyword id="KW-0508">mRNA splicing</keyword>
<keyword id="KW-0547">Nucleotide-binding</keyword>
<keyword id="KW-0539">Nucleus</keyword>
<keyword id="KW-0597">Phosphoprotein</keyword>
<keyword id="KW-1267">Proteomics identification</keyword>
<keyword id="KW-1185">Reference proteome</keyword>
<keyword id="KW-0694">RNA-binding</keyword>
<keyword id="KW-0698">rRNA processing</keyword>
<feature type="initiator methionine" description="Removed" evidence="11 15 16 17">
    <location>
        <position position="1"/>
    </location>
</feature>
<feature type="chain" id="PRO_0000055050" description="Probable ATP-dependent RNA helicase DDX47">
    <location>
        <begin position="2"/>
        <end position="455"/>
    </location>
</feature>
<feature type="domain" description="Helicase ATP-binding" evidence="2">
    <location>
        <begin position="55"/>
        <end position="226"/>
    </location>
</feature>
<feature type="domain" description="Helicase C-terminal" evidence="3">
    <location>
        <begin position="237"/>
        <end position="397"/>
    </location>
</feature>
<feature type="region of interest" description="Disordered" evidence="4">
    <location>
        <begin position="1"/>
        <end position="20"/>
    </location>
</feature>
<feature type="region of interest" description="Disordered" evidence="4">
    <location>
        <begin position="413"/>
        <end position="455"/>
    </location>
</feature>
<feature type="short sequence motif" description="Q motif">
    <location>
        <begin position="24"/>
        <end position="52"/>
    </location>
</feature>
<feature type="short sequence motif" description="DEAD box">
    <location>
        <begin position="174"/>
        <end position="177"/>
    </location>
</feature>
<feature type="compositionally biased region" description="Basic and acidic residues" evidence="4">
    <location>
        <begin position="1"/>
        <end position="10"/>
    </location>
</feature>
<feature type="compositionally biased region" description="Basic and acidic residues" evidence="4">
    <location>
        <begin position="413"/>
        <end position="428"/>
    </location>
</feature>
<feature type="binding site">
    <location>
        <begin position="68"/>
        <end position="75"/>
    </location>
    <ligand>
        <name>ATP</name>
        <dbReference type="ChEBI" id="CHEBI:30616"/>
    </ligand>
</feature>
<feature type="modified residue" description="N-acetylalanine" evidence="11 15 16 17">
    <location>
        <position position="2"/>
    </location>
</feature>
<feature type="modified residue" description="Phosphoserine" evidence="17 18">
    <location>
        <position position="9"/>
    </location>
</feature>
<feature type="modified residue" description="Phosphothreonine" evidence="18">
    <location>
        <position position="149"/>
    </location>
</feature>
<feature type="modified residue" description="Phosphoserine" evidence="14">
    <location>
        <position position="424"/>
    </location>
</feature>
<feature type="splice variant" id="VSP_045239" description="In isoform 2." evidence="12">
    <location>
        <begin position="251"/>
        <end position="299"/>
    </location>
</feature>
<feature type="sequence variant" id="VAR_083613" description="Found in a patient with a neurodevelopmental disorder; uncertain significance; dbSNP:rs577622688." evidence="10">
    <original>D</original>
    <variation>Y</variation>
    <location>
        <position position="8"/>
    </location>
</feature>
<feature type="sequence variant" id="VAR_083614" description="Found in a patient with a neurodevelopmental disorder; uncertain significance." evidence="10">
    <original>Q</original>
    <variation>E</variation>
    <location>
        <position position="107"/>
    </location>
</feature>
<feature type="sequence conflict" description="In Ref. 3; BAB70762." evidence="13" ref="3">
    <original>I</original>
    <variation>V</variation>
    <location>
        <position position="55"/>
    </location>
</feature>
<feature type="helix" evidence="19">
    <location>
        <begin position="18"/>
        <end position="23"/>
    </location>
</feature>
<feature type="helix" evidence="19">
    <location>
        <begin position="27"/>
        <end position="29"/>
    </location>
</feature>
<feature type="helix" evidence="19">
    <location>
        <begin position="33"/>
        <end position="41"/>
    </location>
</feature>
<feature type="helix" evidence="19">
    <location>
        <begin position="49"/>
        <end position="59"/>
    </location>
</feature>
<feature type="strand" evidence="19">
    <location>
        <begin position="64"/>
        <end position="67"/>
    </location>
</feature>
<feature type="helix" evidence="19">
    <location>
        <begin position="74"/>
        <end position="88"/>
    </location>
</feature>
<feature type="strand" evidence="19">
    <location>
        <begin position="95"/>
        <end position="98"/>
    </location>
</feature>
<feature type="helix" evidence="19">
    <location>
        <begin position="102"/>
        <end position="116"/>
    </location>
</feature>
<feature type="helix" evidence="19">
    <location>
        <begin position="117"/>
        <end position="119"/>
    </location>
</feature>
<feature type="strand" evidence="19">
    <location>
        <begin position="123"/>
        <end position="126"/>
    </location>
</feature>
<feature type="helix" evidence="19">
    <location>
        <begin position="132"/>
        <end position="140"/>
    </location>
</feature>
<feature type="strand" evidence="19">
    <location>
        <begin position="144"/>
        <end position="148"/>
    </location>
</feature>
<feature type="helix" evidence="19">
    <location>
        <begin position="150"/>
        <end position="159"/>
    </location>
</feature>
<feature type="strand" evidence="19">
    <location>
        <begin position="170"/>
        <end position="173"/>
    </location>
</feature>
<feature type="helix" evidence="19">
    <location>
        <begin position="176"/>
        <end position="181"/>
    </location>
</feature>
<feature type="helix" evidence="19">
    <location>
        <begin position="185"/>
        <end position="193"/>
    </location>
</feature>
<feature type="strand" evidence="19">
    <location>
        <begin position="197"/>
        <end position="207"/>
    </location>
</feature>
<feature type="helix" evidence="19">
    <location>
        <begin position="210"/>
        <end position="219"/>
    </location>
</feature>
<feature type="strand" evidence="19">
    <location>
        <begin position="224"/>
        <end position="227"/>
    </location>
</feature>
<name>DDX47_HUMAN</name>
<dbReference type="EC" id="3.6.4.13"/>
<dbReference type="EMBL" id="AL136666">
    <property type="protein sequence ID" value="CAB66601.1"/>
    <property type="molecule type" value="mRNA"/>
</dbReference>
<dbReference type="EMBL" id="AK054574">
    <property type="protein sequence ID" value="BAB70762.1"/>
    <property type="molecule type" value="mRNA"/>
</dbReference>
<dbReference type="EMBL" id="AK127712">
    <property type="protein sequence ID" value="BAG54556.1"/>
    <property type="molecule type" value="mRNA"/>
</dbReference>
<dbReference type="EMBL" id="AC007215">
    <property type="status" value="NOT_ANNOTATED_CDS"/>
    <property type="molecule type" value="Genomic_DNA"/>
</dbReference>
<dbReference type="EMBL" id="CH471094">
    <property type="protein sequence ID" value="EAW96277.1"/>
    <property type="molecule type" value="Genomic_DNA"/>
</dbReference>
<dbReference type="EMBL" id="CH471094">
    <property type="protein sequence ID" value="EAW96283.1"/>
    <property type="molecule type" value="Genomic_DNA"/>
</dbReference>
<dbReference type="EMBL" id="BC009379">
    <property type="protein sequence ID" value="AAH09379.2"/>
    <property type="molecule type" value="mRNA"/>
</dbReference>
<dbReference type="EMBL" id="BC068009">
    <property type="protein sequence ID" value="AAH68009.1"/>
    <property type="molecule type" value="mRNA"/>
</dbReference>
<dbReference type="EMBL" id="AF078843">
    <property type="protein sequence ID" value="AAF23354.1"/>
    <property type="status" value="ALT_INIT"/>
    <property type="molecule type" value="mRNA"/>
</dbReference>
<dbReference type="CCDS" id="CCDS8655.1">
    <molecule id="Q9H0S4-1"/>
</dbReference>
<dbReference type="CCDS" id="CCDS8656.1">
    <molecule id="Q9H0S4-2"/>
</dbReference>
<dbReference type="RefSeq" id="NP_057439.2">
    <molecule id="Q9H0S4-1"/>
    <property type="nucleotide sequence ID" value="NM_016355.3"/>
</dbReference>
<dbReference type="RefSeq" id="NP_957518.1">
    <molecule id="Q9H0S4-2"/>
    <property type="nucleotide sequence ID" value="NM_201224.2"/>
</dbReference>
<dbReference type="PDB" id="3BER">
    <property type="method" value="X-ray"/>
    <property type="resolution" value="1.40 A"/>
    <property type="chains" value="A=5-230"/>
</dbReference>
<dbReference type="PDBsum" id="3BER"/>
<dbReference type="SMR" id="Q9H0S4"/>
<dbReference type="BioGRID" id="119375">
    <property type="interactions" value="193"/>
</dbReference>
<dbReference type="FunCoup" id="Q9H0S4">
    <property type="interactions" value="3233"/>
</dbReference>
<dbReference type="IntAct" id="Q9H0S4">
    <property type="interactions" value="82"/>
</dbReference>
<dbReference type="MINT" id="Q9H0S4"/>
<dbReference type="STRING" id="9606.ENSP00000350698"/>
<dbReference type="GlyGen" id="Q9H0S4">
    <property type="glycosylation" value="1 site, 1 O-linked glycan (1 site)"/>
</dbReference>
<dbReference type="iPTMnet" id="Q9H0S4"/>
<dbReference type="MetOSite" id="Q9H0S4"/>
<dbReference type="PhosphoSitePlus" id="Q9H0S4"/>
<dbReference type="SwissPalm" id="Q9H0S4"/>
<dbReference type="BioMuta" id="DDX47"/>
<dbReference type="DMDM" id="52782792"/>
<dbReference type="jPOST" id="Q9H0S4"/>
<dbReference type="MassIVE" id="Q9H0S4"/>
<dbReference type="PaxDb" id="9606-ENSP00000350698"/>
<dbReference type="PeptideAtlas" id="Q9H0S4"/>
<dbReference type="ProteomicsDB" id="33835"/>
<dbReference type="ProteomicsDB" id="80322">
    <molecule id="Q9H0S4-1"/>
</dbReference>
<dbReference type="Pumba" id="Q9H0S4"/>
<dbReference type="Antibodypedia" id="3114">
    <property type="antibodies" value="199 antibodies from 25 providers"/>
</dbReference>
<dbReference type="DNASU" id="51202"/>
<dbReference type="Ensembl" id="ENST00000352940.8">
    <molecule id="Q9H0S4-2"/>
    <property type="protein sequence ID" value="ENSP00000319578.6"/>
    <property type="gene ID" value="ENSG00000213782.7"/>
</dbReference>
<dbReference type="Ensembl" id="ENST00000358007.7">
    <molecule id="Q9H0S4-1"/>
    <property type="protein sequence ID" value="ENSP00000350698.3"/>
    <property type="gene ID" value="ENSG00000213782.7"/>
</dbReference>
<dbReference type="GeneID" id="51202"/>
<dbReference type="KEGG" id="hsa:51202"/>
<dbReference type="MANE-Select" id="ENST00000358007.7">
    <property type="protein sequence ID" value="ENSP00000350698.3"/>
    <property type="RefSeq nucleotide sequence ID" value="NM_016355.4"/>
    <property type="RefSeq protein sequence ID" value="NP_057439.2"/>
</dbReference>
<dbReference type="UCSC" id="uc001rax.4">
    <molecule id="Q9H0S4-1"/>
    <property type="organism name" value="human"/>
</dbReference>
<dbReference type="AGR" id="HGNC:18682"/>
<dbReference type="CTD" id="51202"/>
<dbReference type="DisGeNET" id="51202"/>
<dbReference type="GeneCards" id="DDX47"/>
<dbReference type="HGNC" id="HGNC:18682">
    <property type="gene designation" value="DDX47"/>
</dbReference>
<dbReference type="HPA" id="ENSG00000213782">
    <property type="expression patterns" value="Low tissue specificity"/>
</dbReference>
<dbReference type="MIM" id="615428">
    <property type="type" value="gene"/>
</dbReference>
<dbReference type="neXtProt" id="NX_Q9H0S4"/>
<dbReference type="OpenTargets" id="ENSG00000213782"/>
<dbReference type="PharmGKB" id="PA134918403"/>
<dbReference type="VEuPathDB" id="HostDB:ENSG00000213782"/>
<dbReference type="eggNOG" id="KOG0330">
    <property type="taxonomic scope" value="Eukaryota"/>
</dbReference>
<dbReference type="GeneTree" id="ENSGT00940000155774"/>
<dbReference type="HOGENOM" id="CLU_003041_1_1_1"/>
<dbReference type="InParanoid" id="Q9H0S4"/>
<dbReference type="OMA" id="GIGIKCC"/>
<dbReference type="OrthoDB" id="10261904at2759"/>
<dbReference type="PAN-GO" id="Q9H0S4">
    <property type="GO annotations" value="2 GO annotations based on evolutionary models"/>
</dbReference>
<dbReference type="PhylomeDB" id="Q9H0S4"/>
<dbReference type="TreeFam" id="TF105714"/>
<dbReference type="PathwayCommons" id="Q9H0S4"/>
<dbReference type="Reactome" id="R-HSA-6790901">
    <property type="pathway name" value="rRNA modification in the nucleus and cytosol"/>
</dbReference>
<dbReference type="Reactome" id="R-HSA-6791226">
    <property type="pathway name" value="Major pathway of rRNA processing in the nucleolus and cytosol"/>
</dbReference>
<dbReference type="SignaLink" id="Q9H0S4"/>
<dbReference type="BioGRID-ORCS" id="51202">
    <property type="hits" value="804 hits in 1157 CRISPR screens"/>
</dbReference>
<dbReference type="CD-CODE" id="91857CE7">
    <property type="entry name" value="Nucleolus"/>
</dbReference>
<dbReference type="CD-CODE" id="DEE660B4">
    <property type="entry name" value="Stress granule"/>
</dbReference>
<dbReference type="ChiTaRS" id="DDX47">
    <property type="organism name" value="human"/>
</dbReference>
<dbReference type="EvolutionaryTrace" id="Q9H0S4"/>
<dbReference type="GeneWiki" id="DDX47"/>
<dbReference type="GenomeRNAi" id="51202"/>
<dbReference type="Pharos" id="Q9H0S4">
    <property type="development level" value="Tbio"/>
</dbReference>
<dbReference type="PRO" id="PR:Q9H0S4"/>
<dbReference type="Proteomes" id="UP000005640">
    <property type="component" value="Chromosome 12"/>
</dbReference>
<dbReference type="RNAct" id="Q9H0S4">
    <property type="molecule type" value="protein"/>
</dbReference>
<dbReference type="Bgee" id="ENSG00000213782">
    <property type="expression patterns" value="Expressed in islet of Langerhans and 100 other cell types or tissues"/>
</dbReference>
<dbReference type="ExpressionAtlas" id="Q9H0S4">
    <property type="expression patterns" value="baseline and differential"/>
</dbReference>
<dbReference type="GO" id="GO:0016020">
    <property type="term" value="C:membrane"/>
    <property type="evidence" value="ECO:0007005"/>
    <property type="project" value="UniProtKB"/>
</dbReference>
<dbReference type="GO" id="GO:0005730">
    <property type="term" value="C:nucleolus"/>
    <property type="evidence" value="ECO:0000314"/>
    <property type="project" value="HPA"/>
</dbReference>
<dbReference type="GO" id="GO:0005654">
    <property type="term" value="C:nucleoplasm"/>
    <property type="evidence" value="ECO:0000304"/>
    <property type="project" value="Reactome"/>
</dbReference>
<dbReference type="GO" id="GO:0005634">
    <property type="term" value="C:nucleus"/>
    <property type="evidence" value="ECO:0000318"/>
    <property type="project" value="GO_Central"/>
</dbReference>
<dbReference type="GO" id="GO:0005524">
    <property type="term" value="F:ATP binding"/>
    <property type="evidence" value="ECO:0007669"/>
    <property type="project" value="UniProtKB-KW"/>
</dbReference>
<dbReference type="GO" id="GO:0016887">
    <property type="term" value="F:ATP hydrolysis activity"/>
    <property type="evidence" value="ECO:0007669"/>
    <property type="project" value="RHEA"/>
</dbReference>
<dbReference type="GO" id="GO:0003723">
    <property type="term" value="F:RNA binding"/>
    <property type="evidence" value="ECO:0007005"/>
    <property type="project" value="UniProtKB"/>
</dbReference>
<dbReference type="GO" id="GO:0003724">
    <property type="term" value="F:RNA helicase activity"/>
    <property type="evidence" value="ECO:0007669"/>
    <property type="project" value="UniProtKB-EC"/>
</dbReference>
<dbReference type="GO" id="GO:0008625">
    <property type="term" value="P:extrinsic apoptotic signaling pathway via death domain receptors"/>
    <property type="evidence" value="ECO:0000314"/>
    <property type="project" value="UniProtKB"/>
</dbReference>
<dbReference type="GO" id="GO:0006397">
    <property type="term" value="P:mRNA processing"/>
    <property type="evidence" value="ECO:0007669"/>
    <property type="project" value="UniProtKB-KW"/>
</dbReference>
<dbReference type="GO" id="GO:0008380">
    <property type="term" value="P:RNA splicing"/>
    <property type="evidence" value="ECO:0000315"/>
    <property type="project" value="UniProtKB"/>
</dbReference>
<dbReference type="GO" id="GO:0006364">
    <property type="term" value="P:rRNA processing"/>
    <property type="evidence" value="ECO:0000315"/>
    <property type="project" value="UniProtKB"/>
</dbReference>
<dbReference type="CDD" id="cd17954">
    <property type="entry name" value="DEADc_DDX47"/>
    <property type="match status" value="1"/>
</dbReference>
<dbReference type="CDD" id="cd18787">
    <property type="entry name" value="SF2_C_DEAD"/>
    <property type="match status" value="1"/>
</dbReference>
<dbReference type="FunFam" id="3.40.50.300:FF:000626">
    <property type="entry name" value="probable ATP-dependent RNA helicase DDX47"/>
    <property type="match status" value="1"/>
</dbReference>
<dbReference type="FunFam" id="3.40.50.300:FF:000681">
    <property type="entry name" value="probable ATP-dependent RNA helicase DDX47"/>
    <property type="match status" value="1"/>
</dbReference>
<dbReference type="Gene3D" id="3.40.50.300">
    <property type="entry name" value="P-loop containing nucleotide triphosphate hydrolases"/>
    <property type="match status" value="2"/>
</dbReference>
<dbReference type="InterPro" id="IPR044765">
    <property type="entry name" value="DDX47/Rrp3_DEADc"/>
</dbReference>
<dbReference type="InterPro" id="IPR011545">
    <property type="entry name" value="DEAD/DEAH_box_helicase_dom"/>
</dbReference>
<dbReference type="InterPro" id="IPR050079">
    <property type="entry name" value="DEAD_box_RNA_helicase"/>
</dbReference>
<dbReference type="InterPro" id="IPR014001">
    <property type="entry name" value="Helicase_ATP-bd"/>
</dbReference>
<dbReference type="InterPro" id="IPR001650">
    <property type="entry name" value="Helicase_C-like"/>
</dbReference>
<dbReference type="InterPro" id="IPR027417">
    <property type="entry name" value="P-loop_NTPase"/>
</dbReference>
<dbReference type="InterPro" id="IPR000629">
    <property type="entry name" value="RNA-helicase_DEAD-box_CS"/>
</dbReference>
<dbReference type="InterPro" id="IPR014014">
    <property type="entry name" value="RNA_helicase_DEAD_Q_motif"/>
</dbReference>
<dbReference type="PANTHER" id="PTHR47959">
    <property type="entry name" value="ATP-DEPENDENT RNA HELICASE RHLE-RELATED"/>
    <property type="match status" value="1"/>
</dbReference>
<dbReference type="PANTHER" id="PTHR47959:SF20">
    <property type="entry name" value="RNA HELICASE"/>
    <property type="match status" value="1"/>
</dbReference>
<dbReference type="Pfam" id="PF00270">
    <property type="entry name" value="DEAD"/>
    <property type="match status" value="1"/>
</dbReference>
<dbReference type="Pfam" id="PF00271">
    <property type="entry name" value="Helicase_C"/>
    <property type="match status" value="1"/>
</dbReference>
<dbReference type="SMART" id="SM00487">
    <property type="entry name" value="DEXDc"/>
    <property type="match status" value="1"/>
</dbReference>
<dbReference type="SMART" id="SM00490">
    <property type="entry name" value="HELICc"/>
    <property type="match status" value="1"/>
</dbReference>
<dbReference type="SUPFAM" id="SSF52540">
    <property type="entry name" value="P-loop containing nucleoside triphosphate hydrolases"/>
    <property type="match status" value="1"/>
</dbReference>
<dbReference type="PROSITE" id="PS00039">
    <property type="entry name" value="DEAD_ATP_HELICASE"/>
    <property type="match status" value="1"/>
</dbReference>
<dbReference type="PROSITE" id="PS51192">
    <property type="entry name" value="HELICASE_ATP_BIND_1"/>
    <property type="match status" value="1"/>
</dbReference>
<dbReference type="PROSITE" id="PS51194">
    <property type="entry name" value="HELICASE_CTER"/>
    <property type="match status" value="1"/>
</dbReference>
<dbReference type="PROSITE" id="PS51195">
    <property type="entry name" value="Q_MOTIF"/>
    <property type="match status" value="1"/>
</dbReference>
<reference key="1">
    <citation type="journal article" date="2001" name="Genome Res.">
        <title>Towards a catalog of human genes and proteins: sequencing and analysis of 500 novel complete protein coding human cDNAs.</title>
        <authorList>
            <person name="Wiemann S."/>
            <person name="Weil B."/>
            <person name="Wellenreuther R."/>
            <person name="Gassenhuber J."/>
            <person name="Glassl S."/>
            <person name="Ansorge W."/>
            <person name="Boecher M."/>
            <person name="Bloecker H."/>
            <person name="Bauersachs S."/>
            <person name="Blum H."/>
            <person name="Lauber J."/>
            <person name="Duesterhoeft A."/>
            <person name="Beyer A."/>
            <person name="Koehrer K."/>
            <person name="Strack N."/>
            <person name="Mewes H.-W."/>
            <person name="Ottenwaelder B."/>
            <person name="Obermaier B."/>
            <person name="Tampe J."/>
            <person name="Heubner D."/>
            <person name="Wambutt R."/>
            <person name="Korn B."/>
            <person name="Klein M."/>
            <person name="Poustka A."/>
        </authorList>
    </citation>
    <scope>NUCLEOTIDE SEQUENCE [LARGE SCALE MRNA] (ISOFORM 1)</scope>
    <source>
        <tissue>Brain</tissue>
    </source>
</reference>
<reference key="2">
    <citation type="journal article" date="2004" name="Nat. Genet.">
        <title>Complete sequencing and characterization of 21,243 full-length human cDNAs.</title>
        <authorList>
            <person name="Ota T."/>
            <person name="Suzuki Y."/>
            <person name="Nishikawa T."/>
            <person name="Otsuki T."/>
            <person name="Sugiyama T."/>
            <person name="Irie R."/>
            <person name="Wakamatsu A."/>
            <person name="Hayashi K."/>
            <person name="Sato H."/>
            <person name="Nagai K."/>
            <person name="Kimura K."/>
            <person name="Makita H."/>
            <person name="Sekine M."/>
            <person name="Obayashi M."/>
            <person name="Nishi T."/>
            <person name="Shibahara T."/>
            <person name="Tanaka T."/>
            <person name="Ishii S."/>
            <person name="Yamamoto J."/>
            <person name="Saito K."/>
            <person name="Kawai Y."/>
            <person name="Isono Y."/>
            <person name="Nakamura Y."/>
            <person name="Nagahari K."/>
            <person name="Murakami K."/>
            <person name="Yasuda T."/>
            <person name="Iwayanagi T."/>
            <person name="Wagatsuma M."/>
            <person name="Shiratori A."/>
            <person name="Sudo H."/>
            <person name="Hosoiri T."/>
            <person name="Kaku Y."/>
            <person name="Kodaira H."/>
            <person name="Kondo H."/>
            <person name="Sugawara M."/>
            <person name="Takahashi M."/>
            <person name="Kanda K."/>
            <person name="Yokoi T."/>
            <person name="Furuya T."/>
            <person name="Kikkawa E."/>
            <person name="Omura Y."/>
            <person name="Abe K."/>
            <person name="Kamihara K."/>
            <person name="Katsuta N."/>
            <person name="Sato K."/>
            <person name="Tanikawa M."/>
            <person name="Yamazaki M."/>
            <person name="Ninomiya K."/>
            <person name="Ishibashi T."/>
            <person name="Yamashita H."/>
            <person name="Murakawa K."/>
            <person name="Fujimori K."/>
            <person name="Tanai H."/>
            <person name="Kimata M."/>
            <person name="Watanabe M."/>
            <person name="Hiraoka S."/>
            <person name="Chiba Y."/>
            <person name="Ishida S."/>
            <person name="Ono Y."/>
            <person name="Takiguchi S."/>
            <person name="Watanabe S."/>
            <person name="Yosida M."/>
            <person name="Hotuta T."/>
            <person name="Kusano J."/>
            <person name="Kanehori K."/>
            <person name="Takahashi-Fujii A."/>
            <person name="Hara H."/>
            <person name="Tanase T.-O."/>
            <person name="Nomura Y."/>
            <person name="Togiya S."/>
            <person name="Komai F."/>
            <person name="Hara R."/>
            <person name="Takeuchi K."/>
            <person name="Arita M."/>
            <person name="Imose N."/>
            <person name="Musashino K."/>
            <person name="Yuuki H."/>
            <person name="Oshima A."/>
            <person name="Sasaki N."/>
            <person name="Aotsuka S."/>
            <person name="Yoshikawa Y."/>
            <person name="Matsunawa H."/>
            <person name="Ichihara T."/>
            <person name="Shiohata N."/>
            <person name="Sano S."/>
            <person name="Moriya S."/>
            <person name="Momiyama H."/>
            <person name="Satoh N."/>
            <person name="Takami S."/>
            <person name="Terashima Y."/>
            <person name="Suzuki O."/>
            <person name="Nakagawa S."/>
            <person name="Senoh A."/>
            <person name="Mizoguchi H."/>
            <person name="Goto Y."/>
            <person name="Shimizu F."/>
            <person name="Wakebe H."/>
            <person name="Hishigaki H."/>
            <person name="Watanabe T."/>
            <person name="Sugiyama A."/>
            <person name="Takemoto M."/>
            <person name="Kawakami B."/>
            <person name="Yamazaki M."/>
            <person name="Watanabe K."/>
            <person name="Kumagai A."/>
            <person name="Itakura S."/>
            <person name="Fukuzumi Y."/>
            <person name="Fujimori Y."/>
            <person name="Komiyama M."/>
            <person name="Tashiro H."/>
            <person name="Tanigami A."/>
            <person name="Fujiwara T."/>
            <person name="Ono T."/>
            <person name="Yamada K."/>
            <person name="Fujii Y."/>
            <person name="Ozaki K."/>
            <person name="Hirao M."/>
            <person name="Ohmori Y."/>
            <person name="Kawabata A."/>
            <person name="Hikiji T."/>
            <person name="Kobatake N."/>
            <person name="Inagaki H."/>
            <person name="Ikema Y."/>
            <person name="Okamoto S."/>
            <person name="Okitani R."/>
            <person name="Kawakami T."/>
            <person name="Noguchi S."/>
            <person name="Itoh T."/>
            <person name="Shigeta K."/>
            <person name="Senba T."/>
            <person name="Matsumura K."/>
            <person name="Nakajima Y."/>
            <person name="Mizuno T."/>
            <person name="Morinaga M."/>
            <person name="Sasaki M."/>
            <person name="Togashi T."/>
            <person name="Oyama M."/>
            <person name="Hata H."/>
            <person name="Watanabe M."/>
            <person name="Komatsu T."/>
            <person name="Mizushima-Sugano J."/>
            <person name="Satoh T."/>
            <person name="Shirai Y."/>
            <person name="Takahashi Y."/>
            <person name="Nakagawa K."/>
            <person name="Okumura K."/>
            <person name="Nagase T."/>
            <person name="Nomura N."/>
            <person name="Kikuchi H."/>
            <person name="Masuho Y."/>
            <person name="Yamashita R."/>
            <person name="Nakai K."/>
            <person name="Yada T."/>
            <person name="Nakamura Y."/>
            <person name="Ohara O."/>
            <person name="Isogai T."/>
            <person name="Sugano S."/>
        </authorList>
    </citation>
    <scope>NUCLEOTIDE SEQUENCE [LARGE SCALE MRNA] (ISOFORM 1)</scope>
</reference>
<reference key="3">
    <citation type="journal article" date="2006" name="Nature">
        <title>The finished DNA sequence of human chromosome 12.</title>
        <authorList>
            <person name="Scherer S.E."/>
            <person name="Muzny D.M."/>
            <person name="Buhay C.J."/>
            <person name="Chen R."/>
            <person name="Cree A."/>
            <person name="Ding Y."/>
            <person name="Dugan-Rocha S."/>
            <person name="Gill R."/>
            <person name="Gunaratne P."/>
            <person name="Harris R.A."/>
            <person name="Hawes A.C."/>
            <person name="Hernandez J."/>
            <person name="Hodgson A.V."/>
            <person name="Hume J."/>
            <person name="Jackson A."/>
            <person name="Khan Z.M."/>
            <person name="Kovar-Smith C."/>
            <person name="Lewis L.R."/>
            <person name="Lozado R.J."/>
            <person name="Metzker M.L."/>
            <person name="Milosavljevic A."/>
            <person name="Miner G.R."/>
            <person name="Montgomery K.T."/>
            <person name="Morgan M.B."/>
            <person name="Nazareth L.V."/>
            <person name="Scott G."/>
            <person name="Sodergren E."/>
            <person name="Song X.-Z."/>
            <person name="Steffen D."/>
            <person name="Lovering R.C."/>
            <person name="Wheeler D.A."/>
            <person name="Worley K.C."/>
            <person name="Yuan Y."/>
            <person name="Zhang Z."/>
            <person name="Adams C.Q."/>
            <person name="Ansari-Lari M.A."/>
            <person name="Ayele M."/>
            <person name="Brown M.J."/>
            <person name="Chen G."/>
            <person name="Chen Z."/>
            <person name="Clerc-Blankenburg K.P."/>
            <person name="Davis C."/>
            <person name="Delgado O."/>
            <person name="Dinh H.H."/>
            <person name="Draper H."/>
            <person name="Gonzalez-Garay M.L."/>
            <person name="Havlak P."/>
            <person name="Jackson L.R."/>
            <person name="Jacob L.S."/>
            <person name="Kelly S.H."/>
            <person name="Li L."/>
            <person name="Li Z."/>
            <person name="Liu J."/>
            <person name="Liu W."/>
            <person name="Lu J."/>
            <person name="Maheshwari M."/>
            <person name="Nguyen B.-V."/>
            <person name="Okwuonu G.O."/>
            <person name="Pasternak S."/>
            <person name="Perez L.M."/>
            <person name="Plopper F.J.H."/>
            <person name="Santibanez J."/>
            <person name="Shen H."/>
            <person name="Tabor P.E."/>
            <person name="Verduzco D."/>
            <person name="Waldron L."/>
            <person name="Wang Q."/>
            <person name="Williams G.A."/>
            <person name="Zhang J."/>
            <person name="Zhou J."/>
            <person name="Allen C.C."/>
            <person name="Amin A.G."/>
            <person name="Anyalebechi V."/>
            <person name="Bailey M."/>
            <person name="Barbaria J.A."/>
            <person name="Bimage K.E."/>
            <person name="Bryant N.P."/>
            <person name="Burch P.E."/>
            <person name="Burkett C.E."/>
            <person name="Burrell K.L."/>
            <person name="Calderon E."/>
            <person name="Cardenas V."/>
            <person name="Carter K."/>
            <person name="Casias K."/>
            <person name="Cavazos I."/>
            <person name="Cavazos S.R."/>
            <person name="Ceasar H."/>
            <person name="Chacko J."/>
            <person name="Chan S.N."/>
            <person name="Chavez D."/>
            <person name="Christopoulos C."/>
            <person name="Chu J."/>
            <person name="Cockrell R."/>
            <person name="Cox C.D."/>
            <person name="Dang M."/>
            <person name="Dathorne S.R."/>
            <person name="David R."/>
            <person name="Davis C.M."/>
            <person name="Davy-Carroll L."/>
            <person name="Deshazo D.R."/>
            <person name="Donlin J.E."/>
            <person name="D'Souza L."/>
            <person name="Eaves K.A."/>
            <person name="Egan A."/>
            <person name="Emery-Cohen A.J."/>
            <person name="Escotto M."/>
            <person name="Flagg N."/>
            <person name="Forbes L.D."/>
            <person name="Gabisi A.M."/>
            <person name="Garza M."/>
            <person name="Hamilton C."/>
            <person name="Henderson N."/>
            <person name="Hernandez O."/>
            <person name="Hines S."/>
            <person name="Hogues M.E."/>
            <person name="Huang M."/>
            <person name="Idlebird D.G."/>
            <person name="Johnson R."/>
            <person name="Jolivet A."/>
            <person name="Jones S."/>
            <person name="Kagan R."/>
            <person name="King L.M."/>
            <person name="Leal B."/>
            <person name="Lebow H."/>
            <person name="Lee S."/>
            <person name="LeVan J.M."/>
            <person name="Lewis L.C."/>
            <person name="London P."/>
            <person name="Lorensuhewa L.M."/>
            <person name="Loulseged H."/>
            <person name="Lovett D.A."/>
            <person name="Lucier A."/>
            <person name="Lucier R.L."/>
            <person name="Ma J."/>
            <person name="Madu R.C."/>
            <person name="Mapua P."/>
            <person name="Martindale A.D."/>
            <person name="Martinez E."/>
            <person name="Massey E."/>
            <person name="Mawhiney S."/>
            <person name="Meador M.G."/>
            <person name="Mendez S."/>
            <person name="Mercado C."/>
            <person name="Mercado I.C."/>
            <person name="Merritt C.E."/>
            <person name="Miner Z.L."/>
            <person name="Minja E."/>
            <person name="Mitchell T."/>
            <person name="Mohabbat F."/>
            <person name="Mohabbat K."/>
            <person name="Montgomery B."/>
            <person name="Moore N."/>
            <person name="Morris S."/>
            <person name="Munidasa M."/>
            <person name="Ngo R.N."/>
            <person name="Nguyen N.B."/>
            <person name="Nickerson E."/>
            <person name="Nwaokelemeh O.O."/>
            <person name="Nwokenkwo S."/>
            <person name="Obregon M."/>
            <person name="Oguh M."/>
            <person name="Oragunye N."/>
            <person name="Oviedo R.J."/>
            <person name="Parish B.J."/>
            <person name="Parker D.N."/>
            <person name="Parrish J."/>
            <person name="Parks K.L."/>
            <person name="Paul H.A."/>
            <person name="Payton B.A."/>
            <person name="Perez A."/>
            <person name="Perrin W."/>
            <person name="Pickens A."/>
            <person name="Primus E.L."/>
            <person name="Pu L.-L."/>
            <person name="Puazo M."/>
            <person name="Quiles M.M."/>
            <person name="Quiroz J.B."/>
            <person name="Rabata D."/>
            <person name="Reeves K."/>
            <person name="Ruiz S.J."/>
            <person name="Shao H."/>
            <person name="Sisson I."/>
            <person name="Sonaike T."/>
            <person name="Sorelle R.P."/>
            <person name="Sutton A.E."/>
            <person name="Svatek A.F."/>
            <person name="Svetz L.A."/>
            <person name="Tamerisa K.S."/>
            <person name="Taylor T.R."/>
            <person name="Teague B."/>
            <person name="Thomas N."/>
            <person name="Thorn R.D."/>
            <person name="Trejos Z.Y."/>
            <person name="Trevino B.K."/>
            <person name="Ukegbu O.N."/>
            <person name="Urban J.B."/>
            <person name="Vasquez L.I."/>
            <person name="Vera V.A."/>
            <person name="Villasana D.M."/>
            <person name="Wang L."/>
            <person name="Ward-Moore S."/>
            <person name="Warren J.T."/>
            <person name="Wei X."/>
            <person name="White F."/>
            <person name="Williamson A.L."/>
            <person name="Wleczyk R."/>
            <person name="Wooden H.S."/>
            <person name="Wooden S.H."/>
            <person name="Yen J."/>
            <person name="Yoon L."/>
            <person name="Yoon V."/>
            <person name="Zorrilla S.E."/>
            <person name="Nelson D."/>
            <person name="Kucherlapati R."/>
            <person name="Weinstock G."/>
            <person name="Gibbs R.A."/>
        </authorList>
    </citation>
    <scope>NUCLEOTIDE SEQUENCE [LARGE SCALE GENOMIC DNA]</scope>
</reference>
<reference key="4">
    <citation type="submission" date="2005-07" db="EMBL/GenBank/DDBJ databases">
        <authorList>
            <person name="Mural R.J."/>
            <person name="Istrail S."/>
            <person name="Sutton G.G."/>
            <person name="Florea L."/>
            <person name="Halpern A.L."/>
            <person name="Mobarry C.M."/>
            <person name="Lippert R."/>
            <person name="Walenz B."/>
            <person name="Shatkay H."/>
            <person name="Dew I."/>
            <person name="Miller J.R."/>
            <person name="Flanigan M.J."/>
            <person name="Edwards N.J."/>
            <person name="Bolanos R."/>
            <person name="Fasulo D."/>
            <person name="Halldorsson B.V."/>
            <person name="Hannenhalli S."/>
            <person name="Turner R."/>
            <person name="Yooseph S."/>
            <person name="Lu F."/>
            <person name="Nusskern D.R."/>
            <person name="Shue B.C."/>
            <person name="Zheng X.H."/>
            <person name="Zhong F."/>
            <person name="Delcher A.L."/>
            <person name="Huson D.H."/>
            <person name="Kravitz S.A."/>
            <person name="Mouchard L."/>
            <person name="Reinert K."/>
            <person name="Remington K.A."/>
            <person name="Clark A.G."/>
            <person name="Waterman M.S."/>
            <person name="Eichler E.E."/>
            <person name="Adams M.D."/>
            <person name="Hunkapiller M.W."/>
            <person name="Myers E.W."/>
            <person name="Venter J.C."/>
        </authorList>
    </citation>
    <scope>NUCLEOTIDE SEQUENCE [LARGE SCALE GENOMIC DNA]</scope>
</reference>
<reference key="5">
    <citation type="journal article" date="2004" name="Genome Res.">
        <title>The status, quality, and expansion of the NIH full-length cDNA project: the Mammalian Gene Collection (MGC).</title>
        <authorList>
            <consortium name="The MGC Project Team"/>
        </authorList>
    </citation>
    <scope>NUCLEOTIDE SEQUENCE [LARGE SCALE MRNA] (ISOFORM 1)</scope>
    <source>
        <tissue>Brain</tissue>
        <tissue>Eye</tissue>
    </source>
</reference>
<reference key="6">
    <citation type="submission" date="2008-12" db="UniProtKB">
        <authorList>
            <person name="Bienvenut W.V."/>
            <person name="Lilla S."/>
            <person name="von Kriegsheim A."/>
            <person name="Lempens A."/>
            <person name="Kolch W."/>
        </authorList>
    </citation>
    <scope>PROTEIN SEQUENCE OF 2-24; 75-102; 142-161; 170-190; 238-248; 285-301; 315-325; 378-384 AND 424-441</scope>
    <scope>CLEAVAGE OF INITIATOR METHIONINE</scope>
    <scope>ACETYLATION AT ALA-2</scope>
    <scope>IDENTIFICATION BY MASS SPECTROMETRY</scope>
    <source>
        <tissue>Ovarian carcinoma</tissue>
    </source>
</reference>
<reference key="7">
    <citation type="submission" date="1998-07" db="EMBL/GenBank/DDBJ databases">
        <title>Functional prediction of the coding sequences of 50 new genes deduced by analysis of cDNA clones from human fetal liver.</title>
        <authorList>
            <person name="Yu Y."/>
            <person name="Zhang C."/>
            <person name="Luo L."/>
            <person name="Ouyang S."/>
            <person name="Zhang S."/>
            <person name="Li W."/>
            <person name="Wu J."/>
            <person name="Zhou S."/>
            <person name="Liu M."/>
            <person name="He F."/>
        </authorList>
    </citation>
    <scope>NUCLEOTIDE SEQUENCE [LARGE SCALE MRNA] OF 8-455 (ISOFORM 2)</scope>
    <source>
        <tissue>Liver</tissue>
    </source>
</reference>
<reference key="8">
    <citation type="journal article" date="2002" name="Mol. Biol. Cell">
        <title>Functional proteomic analysis of human nucleolus.</title>
        <authorList>
            <person name="Scherl A."/>
            <person name="Coute Y."/>
            <person name="Deon C."/>
            <person name="Calle A."/>
            <person name="Kindbeiter K."/>
            <person name="Sanchez J.-C."/>
            <person name="Greco A."/>
            <person name="Hochstrasser D.F."/>
            <person name="Diaz J.-J."/>
        </authorList>
    </citation>
    <scope>SUBCELLULAR LOCATION [LARGE SCALE ANALYSIS]</scope>
    <source>
        <tissue>Cervix carcinoma</tissue>
    </source>
</reference>
<reference key="9">
    <citation type="journal article" date="2005" name="Biotechnol. Lett.">
        <title>GABAA receptor-associated protein (GABARAP) induces apoptosis by interacting with DEAD (Asp-Glu-Ala-Asp/His) box polypeptide 47 (DDX 47).</title>
        <authorList>
            <person name="Lee J.H."/>
            <person name="Rho S.B."/>
            <person name="Chun T."/>
        </authorList>
    </citation>
    <scope>FUNCTION</scope>
    <scope>INTERACTION WITH GABARAP</scope>
    <scope>IDENTIFICATION BY MASS SPECTROMETRY</scope>
</reference>
<reference key="10">
    <citation type="journal article" date="2006" name="Cell">
        <title>Global, in vivo, and site-specific phosphorylation dynamics in signaling networks.</title>
        <authorList>
            <person name="Olsen J.V."/>
            <person name="Blagoev B."/>
            <person name="Gnad F."/>
            <person name="Macek B."/>
            <person name="Kumar C."/>
            <person name="Mortensen P."/>
            <person name="Mann M."/>
        </authorList>
    </citation>
    <scope>IDENTIFICATION BY MASS SPECTROMETRY [LARGE SCALE ANALYSIS]</scope>
    <source>
        <tissue>Cervix carcinoma</tissue>
    </source>
</reference>
<reference key="11">
    <citation type="journal article" date="2006" name="Nucleic Acids Res.">
        <title>NOP132 is required for proper nucleolus localization of DEAD-box RNA helicase DDX47.</title>
        <authorList>
            <person name="Sekiguchi T."/>
            <person name="Hayano T."/>
            <person name="Yanagida M."/>
            <person name="Takahashi N."/>
            <person name="Nishimoto T."/>
        </authorList>
    </citation>
    <scope>FUNCTION</scope>
    <scope>INTERACTION WITH NOL8</scope>
    <scope>SUBCELLULAR LOCATION</scope>
</reference>
<reference key="12">
    <citation type="journal article" date="2007" name="EMBO Rep.">
        <title>Proteomic and functional analysis of Argonaute-containing mRNA-protein complexes in human cells.</title>
        <authorList>
            <person name="Hoeck J."/>
            <person name="Weinmann L."/>
            <person name="Ender C."/>
            <person name="Ruedel S."/>
            <person name="Kremmer E."/>
            <person name="Raabe M."/>
            <person name="Urlaub H."/>
            <person name="Meister G."/>
        </authorList>
    </citation>
    <scope>INTERACTION WITH AGO1 AND AGO2</scope>
</reference>
<reference key="13">
    <citation type="journal article" date="2008" name="Proc. Natl. Acad. Sci. U.S.A.">
        <title>A quantitative atlas of mitotic phosphorylation.</title>
        <authorList>
            <person name="Dephoure N."/>
            <person name="Zhou C."/>
            <person name="Villen J."/>
            <person name="Beausoleil S.A."/>
            <person name="Bakalarski C.E."/>
            <person name="Elledge S.J."/>
            <person name="Gygi S.P."/>
        </authorList>
    </citation>
    <scope>PHOSPHORYLATION [LARGE SCALE ANALYSIS] AT SER-424</scope>
    <scope>IDENTIFICATION BY MASS SPECTROMETRY [LARGE SCALE ANALYSIS]</scope>
    <source>
        <tissue>Cervix carcinoma</tissue>
    </source>
</reference>
<reference key="14">
    <citation type="journal article" date="2009" name="Anal. Chem.">
        <title>Lys-N and trypsin cover complementary parts of the phosphoproteome in a refined SCX-based approach.</title>
        <authorList>
            <person name="Gauci S."/>
            <person name="Helbig A.O."/>
            <person name="Slijper M."/>
            <person name="Krijgsveld J."/>
            <person name="Heck A.J."/>
            <person name="Mohammed S."/>
        </authorList>
    </citation>
    <scope>ACETYLATION [LARGE SCALE ANALYSIS] AT ALA-2</scope>
    <scope>CLEAVAGE OF INITIATOR METHIONINE [LARGE SCALE ANALYSIS]</scope>
    <scope>IDENTIFICATION BY MASS SPECTROMETRY [LARGE SCALE ANALYSIS]</scope>
</reference>
<reference key="15">
    <citation type="journal article" date="2010" name="Sci. Signal.">
        <title>Quantitative phosphoproteomics reveals widespread full phosphorylation site occupancy during mitosis.</title>
        <authorList>
            <person name="Olsen J.V."/>
            <person name="Vermeulen M."/>
            <person name="Santamaria A."/>
            <person name="Kumar C."/>
            <person name="Miller M.L."/>
            <person name="Jensen L.J."/>
            <person name="Gnad F."/>
            <person name="Cox J."/>
            <person name="Jensen T.S."/>
            <person name="Nigg E.A."/>
            <person name="Brunak S."/>
            <person name="Mann M."/>
        </authorList>
    </citation>
    <scope>ACETYLATION [LARGE SCALE ANALYSIS] AT ALA-2</scope>
    <scope>CLEAVAGE OF INITIATOR METHIONINE [LARGE SCALE ANALYSIS]</scope>
    <scope>IDENTIFICATION BY MASS SPECTROMETRY [LARGE SCALE ANALYSIS]</scope>
    <source>
        <tissue>Cervix carcinoma</tissue>
    </source>
</reference>
<reference key="16">
    <citation type="journal article" date="2011" name="BMC Syst. Biol.">
        <title>Initial characterization of the human central proteome.</title>
        <authorList>
            <person name="Burkard T.R."/>
            <person name="Planyavsky M."/>
            <person name="Kaupe I."/>
            <person name="Breitwieser F.P."/>
            <person name="Buerckstuemmer T."/>
            <person name="Bennett K.L."/>
            <person name="Superti-Furga G."/>
            <person name="Colinge J."/>
        </authorList>
    </citation>
    <scope>IDENTIFICATION BY MASS SPECTROMETRY [LARGE SCALE ANALYSIS]</scope>
</reference>
<reference key="17">
    <citation type="journal article" date="2011" name="Sci. Signal.">
        <title>System-wide temporal characterization of the proteome and phosphoproteome of human embryonic stem cell differentiation.</title>
        <authorList>
            <person name="Rigbolt K.T."/>
            <person name="Prokhorova T.A."/>
            <person name="Akimov V."/>
            <person name="Henningsen J."/>
            <person name="Johansen P.T."/>
            <person name="Kratchmarova I."/>
            <person name="Kassem M."/>
            <person name="Mann M."/>
            <person name="Olsen J.V."/>
            <person name="Blagoev B."/>
        </authorList>
    </citation>
    <scope>ACETYLATION [LARGE SCALE ANALYSIS] AT ALA-2</scope>
    <scope>PHOSPHORYLATION [LARGE SCALE ANALYSIS] AT SER-9</scope>
    <scope>CLEAVAGE OF INITIATOR METHIONINE [LARGE SCALE ANALYSIS]</scope>
    <scope>IDENTIFICATION BY MASS SPECTROMETRY [LARGE SCALE ANALYSIS]</scope>
</reference>
<reference key="18">
    <citation type="journal article" date="2013" name="J. Proteome Res.">
        <title>Toward a comprehensive characterization of a human cancer cell phosphoproteome.</title>
        <authorList>
            <person name="Zhou H."/>
            <person name="Di Palma S."/>
            <person name="Preisinger C."/>
            <person name="Peng M."/>
            <person name="Polat A.N."/>
            <person name="Heck A.J."/>
            <person name="Mohammed S."/>
        </authorList>
    </citation>
    <scope>PHOSPHORYLATION [LARGE SCALE ANALYSIS] AT SER-9 AND THR-149</scope>
    <scope>IDENTIFICATION BY MASS SPECTROMETRY [LARGE SCALE ANALYSIS]</scope>
    <source>
        <tissue>Cervix carcinoma</tissue>
        <tissue>Erythroleukemia</tissue>
    </source>
</reference>
<reference key="19">
    <citation type="journal article" date="2010" name="PLoS ONE">
        <title>Comparative structural analysis of human DEAD-box RNA helicases.</title>
        <authorList>
            <person name="Schutz P."/>
            <person name="Karlberg T."/>
            <person name="van den Berg S."/>
            <person name="Collins R."/>
            <person name="Lehtio L."/>
            <person name="Hogbom M."/>
            <person name="Holmberg-Schiavone L."/>
            <person name="Tempel W."/>
            <person name="Park H.W."/>
            <person name="Hammarstrom M."/>
            <person name="Moche M."/>
            <person name="Thorsell A.G."/>
            <person name="Schuler H."/>
        </authorList>
    </citation>
    <scope>X-RAY CRYSTALLOGRAPHY (1.4 ANGSTROMS) OF 1-230 IN COMPLEX WITH AMP</scope>
</reference>
<reference key="20">
    <citation type="journal article" date="2019" name="Am. J. Hum. Genet.">
        <title>Paralog studies augment gene discovery: DDX and DHX genes.</title>
        <authorList>
            <consortium name="University of Washington Center for Mendelian Genomics, Baylor-Hopkins Center for Mendelian Genomics, Telethon Undiagnosed Diseases Program"/>
            <person name="Paine I."/>
            <person name="Posey J.E."/>
            <person name="Grochowski C.M."/>
            <person name="Jhangiani S.N."/>
            <person name="Rosenheck S."/>
            <person name="Kleyner R."/>
            <person name="Marmorale T."/>
            <person name="Yoon M."/>
            <person name="Wang K."/>
            <person name="Robison R."/>
            <person name="Cappuccio G."/>
            <person name="Pinelli M."/>
            <person name="Magli A."/>
            <person name="Coban Akdemir Z."/>
            <person name="Hui J."/>
            <person name="Yeung W.L."/>
            <person name="Wong B.K.Y."/>
            <person name="Ortega L."/>
            <person name="Bekheirnia M.R."/>
            <person name="Bierhals T."/>
            <person name="Hempel M."/>
            <person name="Johannsen J."/>
            <person name="Santer R."/>
            <person name="Aktas D."/>
            <person name="Alikasifoglu M."/>
            <person name="Bozdogan S."/>
            <person name="Aydin H."/>
            <person name="Karaca E."/>
            <person name="Bayram Y."/>
            <person name="Ityel H."/>
            <person name="Dorschner M."/>
            <person name="White J.J."/>
            <person name="Wilichowski E."/>
            <person name="Wortmann S.B."/>
            <person name="Casella E.B."/>
            <person name="Kitajima J.P."/>
            <person name="Kok F."/>
            <person name="Monteiro F."/>
            <person name="Muzny D.M."/>
            <person name="Bamshad M."/>
            <person name="Gibbs R.A."/>
            <person name="Sutton V.R."/>
            <person name="Van Esch H."/>
            <person name="Brunetti-Pierri N."/>
            <person name="Hildebrandt F."/>
            <person name="Brautbar A."/>
            <person name="Van den Veyver I.B."/>
            <person name="Glass I."/>
            <person name="Lessel D."/>
            <person name="Lyon G.J."/>
            <person name="Lupski J.R."/>
        </authorList>
    </citation>
    <scope>VARIANTS TYR-8 AND GLU-107</scope>
    <scope>TISSUE SPECIFICITY</scope>
</reference>
<accession>Q9H0S4</accession>
<accession>B3KXP4</accession>
<accession>G5E955</accession>
<accession>Q96GM0</accession>
<accession>Q96NV8</accession>
<accession>Q9UI98</accession>
<comment type="function">
    <text evidence="1 6 7">Required for efficient ribosome biogenesis (By similarity). May have a role in mRNA splicing (PubMed:16963496). Involved in apoptosis (PubMed:15977068).</text>
</comment>
<comment type="catalytic activity">
    <reaction>
        <text>ATP + H2O = ADP + phosphate + H(+)</text>
        <dbReference type="Rhea" id="RHEA:13065"/>
        <dbReference type="ChEBI" id="CHEBI:15377"/>
        <dbReference type="ChEBI" id="CHEBI:15378"/>
        <dbReference type="ChEBI" id="CHEBI:30616"/>
        <dbReference type="ChEBI" id="CHEBI:43474"/>
        <dbReference type="ChEBI" id="CHEBI:456216"/>
        <dbReference type="EC" id="3.6.4.13"/>
    </reaction>
</comment>
<comment type="subunit">
    <text evidence="6 7 8 9">Interacts with AGO1 and AGO2. Interacts with GABARAP. Interacts with NOL8; the interaction is RNA-dependent.</text>
</comment>
<comment type="interaction">
    <interactant intactId="EBI-2515241">
        <id>Q9H0S4</id>
    </interactant>
    <interactant intactId="EBI-712001">
        <id>O95166</id>
        <label>GABARAP</label>
    </interactant>
    <organismsDiffer>false</organismsDiffer>
    <experiments>3</experiments>
</comment>
<comment type="subcellular location">
    <subcellularLocation>
        <location evidence="5 7">Nucleus</location>
        <location evidence="5 7">Nucleolus</location>
    </subcellularLocation>
    <text>Localizes in the nucleolar-organizing region during ribosome biogenesis.</text>
</comment>
<comment type="alternative products">
    <event type="alternative splicing"/>
    <isoform>
        <id>Q9H0S4-1</id>
        <name>1</name>
        <sequence type="displayed"/>
    </isoform>
    <isoform>
        <id>Q9H0S4-2</id>
        <name>2</name>
        <sequence type="described" ref="VSP_045239"/>
    </isoform>
</comment>
<comment type="tissue specificity">
    <text evidence="10">Expressed in skin, lung and breast. Also expressed in the brain.</text>
</comment>
<comment type="similarity">
    <text evidence="13">Belongs to the DEAD box helicase family. DDX47/RRP3 subfamily.</text>
</comment>
<comment type="sequence caution" evidence="13">
    <conflict type="erroneous initiation">
        <sequence resource="EMBL-CDS" id="AAF23354"/>
    </conflict>
    <text>Truncated N-terminus.</text>
</comment>
<gene>
    <name type="primary">DDX47</name>
</gene>
<evidence type="ECO:0000250" key="1">
    <source>
        <dbReference type="UniProtKB" id="Q9VIF6"/>
    </source>
</evidence>
<evidence type="ECO:0000255" key="2">
    <source>
        <dbReference type="PROSITE-ProRule" id="PRU00541"/>
    </source>
</evidence>
<evidence type="ECO:0000255" key="3">
    <source>
        <dbReference type="PROSITE-ProRule" id="PRU00542"/>
    </source>
</evidence>
<evidence type="ECO:0000256" key="4">
    <source>
        <dbReference type="SAM" id="MobiDB-lite"/>
    </source>
</evidence>
<evidence type="ECO:0000269" key="5">
    <source>
    </source>
</evidence>
<evidence type="ECO:0000269" key="6">
    <source>
    </source>
</evidence>
<evidence type="ECO:0000269" key="7">
    <source>
    </source>
</evidence>
<evidence type="ECO:0000269" key="8">
    <source>
    </source>
</evidence>
<evidence type="ECO:0000269" key="9">
    <source>
    </source>
</evidence>
<evidence type="ECO:0000269" key="10">
    <source>
    </source>
</evidence>
<evidence type="ECO:0000269" key="11">
    <source ref="6"/>
</evidence>
<evidence type="ECO:0000303" key="12">
    <source ref="7"/>
</evidence>
<evidence type="ECO:0000305" key="13"/>
<evidence type="ECO:0007744" key="14">
    <source>
    </source>
</evidence>
<evidence type="ECO:0007744" key="15">
    <source>
    </source>
</evidence>
<evidence type="ECO:0007744" key="16">
    <source>
    </source>
</evidence>
<evidence type="ECO:0007744" key="17">
    <source>
    </source>
</evidence>
<evidence type="ECO:0007744" key="18">
    <source>
    </source>
</evidence>
<evidence type="ECO:0007829" key="19">
    <source>
        <dbReference type="PDB" id="3BER"/>
    </source>
</evidence>